<name>PVK2_POLAY</name>
<evidence type="ECO:0000255" key="1"/>
<evidence type="ECO:0000269" key="2">
    <source>
    </source>
</evidence>
<evidence type="ECO:0000303" key="3">
    <source>
    </source>
</evidence>
<evidence type="ECO:0000305" key="4"/>
<protein>
    <recommendedName>
        <fullName evidence="3">Periviscerokinin-2</fullName>
        <shortName evidence="3">PolAe-PVK-2</shortName>
    </recommendedName>
</protein>
<organism>
    <name type="scientific">Polyphaga aegyptiaca</name>
    <name type="common">Egyptian desert roach</name>
    <dbReference type="NCBI Taxonomy" id="7085"/>
    <lineage>
        <taxon>Eukaryota</taxon>
        <taxon>Metazoa</taxon>
        <taxon>Ecdysozoa</taxon>
        <taxon>Arthropoda</taxon>
        <taxon>Hexapoda</taxon>
        <taxon>Insecta</taxon>
        <taxon>Pterygota</taxon>
        <taxon>Neoptera</taxon>
        <taxon>Polyneoptera</taxon>
        <taxon>Dictyoptera</taxon>
        <taxon>Blattodea</taxon>
        <taxon>Corydioidea</taxon>
        <taxon>Corydiidae</taxon>
        <taxon>Polyphaga</taxon>
    </lineage>
</organism>
<proteinExistence type="evidence at protein level"/>
<reference evidence="4" key="1">
    <citation type="journal article" date="2009" name="BMC Evol. Biol.">
        <title>A proteomic approach for studying insect phylogeny: CAPA peptides of ancient insect taxa (Dictyoptera, Blattoptera) as a test case.</title>
        <authorList>
            <person name="Roth S."/>
            <person name="Fromm B."/>
            <person name="Gaede G."/>
            <person name="Predel R."/>
        </authorList>
    </citation>
    <scope>PROTEIN SEQUENCE</scope>
    <scope>AMIDATION AT VAL-11</scope>
    <source>
        <tissue evidence="2">Abdominal perisympathetic organs</tissue>
    </source>
</reference>
<dbReference type="GO" id="GO:0005576">
    <property type="term" value="C:extracellular region"/>
    <property type="evidence" value="ECO:0007669"/>
    <property type="project" value="UniProtKB-SubCell"/>
</dbReference>
<dbReference type="GO" id="GO:0007218">
    <property type="term" value="P:neuropeptide signaling pathway"/>
    <property type="evidence" value="ECO:0007669"/>
    <property type="project" value="UniProtKB-KW"/>
</dbReference>
<dbReference type="InterPro" id="IPR013231">
    <property type="entry name" value="Periviscerokinin"/>
</dbReference>
<dbReference type="Pfam" id="PF08259">
    <property type="entry name" value="Periviscerokin"/>
    <property type="match status" value="1"/>
</dbReference>
<feature type="peptide" id="PRO_0000378809" description="Periviscerokinin-2" evidence="2">
    <location>
        <begin position="1"/>
        <end position="11"/>
    </location>
</feature>
<feature type="modified residue" description="Valine amide" evidence="2">
    <location>
        <position position="11"/>
    </location>
</feature>
<comment type="function">
    <text evidence="4">Mediates visceral muscle contractile activity (myotropic activity).</text>
</comment>
<comment type="subcellular location">
    <subcellularLocation>
        <location evidence="4">Secreted</location>
    </subcellularLocation>
</comment>
<comment type="similarity">
    <text evidence="1">Belongs to the periviscerokinin family.</text>
</comment>
<keyword id="KW-0027">Amidation</keyword>
<keyword id="KW-0903">Direct protein sequencing</keyword>
<keyword id="KW-0527">Neuropeptide</keyword>
<keyword id="KW-0964">Secreted</keyword>
<accession>P85739</accession>
<sequence>GSSGLISMPRV</sequence>